<feature type="chain" id="PRO_0000086711" description="Serine/threonine-protein kinase 24">
    <location>
        <begin position="1"/>
        <end position="443"/>
    </location>
</feature>
<feature type="chain" id="PRO_0000413618" description="Serine/threonine-protein kinase 24 36 kDa subunit">
    <location>
        <begin position="1"/>
        <end position="325"/>
    </location>
</feature>
<feature type="chain" id="PRO_0000413619" description="Serine/threonine-protein kinase 24 12 kDa subunit">
    <location>
        <begin position="326"/>
        <end position="443"/>
    </location>
</feature>
<feature type="domain" description="Protein kinase" evidence="1">
    <location>
        <begin position="36"/>
        <end position="286"/>
    </location>
</feature>
<feature type="region of interest" description="Disordered" evidence="2">
    <location>
        <begin position="309"/>
        <end position="337"/>
    </location>
</feature>
<feature type="short sequence motif" description="Bipartite nuclear localization signal">
    <location>
        <begin position="278"/>
        <end position="292"/>
    </location>
</feature>
<feature type="short sequence motif" description="Nuclear export signal (NES)">
    <location>
        <begin position="335"/>
        <end position="386"/>
    </location>
</feature>
<feature type="active site" description="Proton acceptor" evidence="1">
    <location>
        <position position="156"/>
    </location>
</feature>
<feature type="binding site">
    <location>
        <begin position="42"/>
        <end position="50"/>
    </location>
    <ligand>
        <name>ATP</name>
        <dbReference type="ChEBI" id="CHEBI:30616"/>
    </ligand>
</feature>
<feature type="binding site">
    <location>
        <position position="65"/>
    </location>
    <ligand>
        <name>ATP</name>
        <dbReference type="ChEBI" id="CHEBI:30616"/>
    </ligand>
</feature>
<feature type="binding site">
    <location>
        <begin position="112"/>
        <end position="114"/>
    </location>
    <ligand>
        <name>ATP</name>
        <dbReference type="ChEBI" id="CHEBI:30616"/>
    </ligand>
</feature>
<feature type="binding site">
    <location>
        <position position="161"/>
    </location>
    <ligand>
        <name>Mg(2+)</name>
        <dbReference type="ChEBI" id="CHEBI:18420"/>
    </ligand>
</feature>
<feature type="binding site">
    <location>
        <position position="174"/>
    </location>
    <ligand>
        <name>Mg(2+)</name>
        <dbReference type="ChEBI" id="CHEBI:18420"/>
    </ligand>
</feature>
<feature type="site" description="Cleavage; by caspase-3, caspase-7 and caspase-8">
    <location>
        <begin position="325"/>
        <end position="326"/>
    </location>
</feature>
<feature type="modified residue" description="Phosphothreonine; by PKA" evidence="3">
    <location>
        <position position="18"/>
    </location>
</feature>
<feature type="modified residue" description="Phosphothreonine; by autocatalysis" evidence="7 10 13 25">
    <location>
        <position position="190"/>
    </location>
</feature>
<feature type="modified residue" description="Phosphoserine" evidence="20">
    <location>
        <position position="320"/>
    </location>
</feature>
<feature type="splice variant" id="VSP_004874" description="In isoform A." evidence="15 16">
    <original>MDSRAQLWGLALNKRRATLPHPGGST</original>
    <variation>MAHSPVQSGLPGMQ</variation>
    <location>
        <begin position="1"/>
        <end position="26"/>
    </location>
</feature>
<feature type="sequence variant" id="VAR_041148" description="In dbSNP:rs55953606." evidence="3 8">
    <original>A</original>
    <variation>V</variation>
    <location>
        <position position="414"/>
    </location>
</feature>
<feature type="sequence variant" id="VAR_041149" description="In dbSNP:rs55897869." evidence="8">
    <original>L</original>
    <variation>I</variation>
    <location>
        <position position="426"/>
    </location>
</feature>
<feature type="mutagenesis site" description="Loss of phosphorylation by PKA." evidence="3">
    <original>T</original>
    <variation>A</variation>
    <location>
        <position position="18"/>
    </location>
</feature>
<feature type="mutagenesis site" description="Loss of activity and autophosphorylation." evidence="4">
    <original>K</original>
    <variation>A</variation>
    <location>
        <position position="65"/>
    </location>
</feature>
<feature type="mutagenesis site" description="Loss of activity and autophosphorylation." evidence="7">
    <original>T</original>
    <variation>A</variation>
    <location>
        <position position="190"/>
    </location>
</feature>
<feature type="mutagenesis site" description="Loss of proteolytic cleavage by caspases." evidence="4">
    <original>D</original>
    <variation>N</variation>
    <location>
        <position position="321"/>
    </location>
</feature>
<feature type="strand" evidence="31">
    <location>
        <begin position="26"/>
        <end position="30"/>
    </location>
</feature>
<feature type="helix" evidence="27">
    <location>
        <begin position="32"/>
        <end position="34"/>
    </location>
</feature>
<feature type="strand" evidence="27">
    <location>
        <begin position="36"/>
        <end position="44"/>
    </location>
</feature>
<feature type="strand" evidence="27">
    <location>
        <begin position="46"/>
        <end position="55"/>
    </location>
</feature>
<feature type="turn" evidence="27">
    <location>
        <begin position="56"/>
        <end position="58"/>
    </location>
</feature>
<feature type="strand" evidence="27">
    <location>
        <begin position="61"/>
        <end position="68"/>
    </location>
</feature>
<feature type="turn" evidence="27">
    <location>
        <begin position="69"/>
        <end position="71"/>
    </location>
</feature>
<feature type="helix" evidence="31">
    <location>
        <begin position="73"/>
        <end position="75"/>
    </location>
</feature>
<feature type="helix" evidence="27">
    <location>
        <begin position="76"/>
        <end position="88"/>
    </location>
</feature>
<feature type="strand" evidence="27">
    <location>
        <begin position="97"/>
        <end position="103"/>
    </location>
</feature>
<feature type="strand" evidence="27">
    <location>
        <begin position="106"/>
        <end position="112"/>
    </location>
</feature>
<feature type="strand" evidence="31">
    <location>
        <begin position="116"/>
        <end position="118"/>
    </location>
</feature>
<feature type="helix" evidence="27">
    <location>
        <begin position="119"/>
        <end position="123"/>
    </location>
</feature>
<feature type="strand" evidence="26">
    <location>
        <begin position="124"/>
        <end position="126"/>
    </location>
</feature>
<feature type="helix" evidence="27">
    <location>
        <begin position="130"/>
        <end position="149"/>
    </location>
</feature>
<feature type="helix" evidence="27">
    <location>
        <begin position="159"/>
        <end position="161"/>
    </location>
</feature>
<feature type="strand" evidence="27">
    <location>
        <begin position="162"/>
        <end position="164"/>
    </location>
</feature>
<feature type="strand" evidence="28">
    <location>
        <begin position="166"/>
        <end position="168"/>
    </location>
</feature>
<feature type="strand" evidence="27">
    <location>
        <begin position="170"/>
        <end position="172"/>
    </location>
</feature>
<feature type="helix" evidence="30">
    <location>
        <begin position="178"/>
        <end position="187"/>
    </location>
</feature>
<feature type="helix" evidence="27">
    <location>
        <begin position="195"/>
        <end position="197"/>
    </location>
</feature>
<feature type="helix" evidence="27">
    <location>
        <begin position="200"/>
        <end position="203"/>
    </location>
</feature>
<feature type="helix" evidence="27">
    <location>
        <begin position="211"/>
        <end position="226"/>
    </location>
</feature>
<feature type="turn" evidence="27">
    <location>
        <begin position="230"/>
        <end position="233"/>
    </location>
</feature>
<feature type="helix" evidence="27">
    <location>
        <begin position="236"/>
        <end position="245"/>
    </location>
</feature>
<feature type="strand" evidence="29">
    <location>
        <begin position="253"/>
        <end position="255"/>
    </location>
</feature>
<feature type="helix" evidence="27">
    <location>
        <begin position="257"/>
        <end position="266"/>
    </location>
</feature>
<feature type="helix" evidence="27">
    <location>
        <begin position="271"/>
        <end position="273"/>
    </location>
</feature>
<feature type="helix" evidence="27">
    <location>
        <begin position="277"/>
        <end position="280"/>
    </location>
</feature>
<feature type="helix" evidence="27">
    <location>
        <begin position="284"/>
        <end position="289"/>
    </location>
</feature>
<feature type="helix" evidence="27">
    <location>
        <begin position="293"/>
        <end position="296"/>
    </location>
</feature>
<feature type="helix" evidence="27">
    <location>
        <begin position="297"/>
        <end position="309"/>
    </location>
</feature>
<feature type="initiator methionine" description="Removed" evidence="22 23 24">
    <location sequence="Q9Y6E0-2">
        <position position="1"/>
    </location>
</feature>
<feature type="modified residue" description="N-acetylalanine" evidence="22 23 24">
    <location sequence="Q9Y6E0-2">
        <position position="2"/>
    </location>
</feature>
<feature type="modified residue" description="Phosphoserine" evidence="21 22 23 24">
    <location sequence="Q9Y6E0-2">
        <position position="4"/>
    </location>
</feature>
<name>STK24_HUMAN</name>
<accession>Q9Y6E0</accession>
<accession>O14840</accession>
<accession>Q5JV92</accession>
<gene>
    <name evidence="19" type="primary">STK24</name>
    <name evidence="16" type="synonym">MST3</name>
    <name evidence="18" type="synonym">STK3</name>
</gene>
<comment type="function">
    <text evidence="6 7 9 10 11 12 14">Serine/threonine-protein kinase that acts on both serine and threonine residues and promotes apoptosis in response to stress stimuli and caspase activation. Mediates oxidative-stress-induced cell death by modulating phosphorylation of JNK1-JNK2 (MAPK8 and MAPK9), p38 (MAPK11, MAPK12, MAPK13 and MAPK14) during oxidative stress. Plays a role in a staurosporine-induced caspase-independent apoptotic pathway by regulating the nuclear translocation of AIFM1 and ENDOG and the DNase activity associated with ENDOG. Phosphorylates STK38L on 'Thr-442' and stimulates its kinase activity. In association with STK26 negatively regulates Golgi reorientation in polarized cell migration upon RHO activation (PubMed:27807006). Also regulates cellular migration with alteration of PTPN12 activity and PXN phosphorylation: phosphorylates PTPN12 and inhibits its activity and may regulate PXN phosphorylation through PTPN12. May act as a key regulator of axon regeneration in the optic nerve and radial nerve. Part of the striatin-interacting phosphatase and kinase (STRIPAK) complexes. STRIPAK complexes have critical roles in protein (de)phosphorylation and are regulators of multiple signaling pathways including Hippo, MAPK, nuclear receptor and cytoskeleton remodeling. Different types of STRIPAK complexes are involved in a variety of biological processes such as cell growth, differentiation, apoptosis, metabolism and immune regulation (PubMed:18782753).</text>
</comment>
<comment type="catalytic activity">
    <reaction>
        <text>L-seryl-[protein] + ATP = O-phospho-L-seryl-[protein] + ADP + H(+)</text>
        <dbReference type="Rhea" id="RHEA:17989"/>
        <dbReference type="Rhea" id="RHEA-COMP:9863"/>
        <dbReference type="Rhea" id="RHEA-COMP:11604"/>
        <dbReference type="ChEBI" id="CHEBI:15378"/>
        <dbReference type="ChEBI" id="CHEBI:29999"/>
        <dbReference type="ChEBI" id="CHEBI:30616"/>
        <dbReference type="ChEBI" id="CHEBI:83421"/>
        <dbReference type="ChEBI" id="CHEBI:456216"/>
        <dbReference type="EC" id="2.7.11.1"/>
    </reaction>
</comment>
<comment type="catalytic activity">
    <reaction>
        <text>L-threonyl-[protein] + ATP = O-phospho-L-threonyl-[protein] + ADP + H(+)</text>
        <dbReference type="Rhea" id="RHEA:46608"/>
        <dbReference type="Rhea" id="RHEA-COMP:11060"/>
        <dbReference type="Rhea" id="RHEA-COMP:11605"/>
        <dbReference type="ChEBI" id="CHEBI:15378"/>
        <dbReference type="ChEBI" id="CHEBI:30013"/>
        <dbReference type="ChEBI" id="CHEBI:30616"/>
        <dbReference type="ChEBI" id="CHEBI:61977"/>
        <dbReference type="ChEBI" id="CHEBI:456216"/>
        <dbReference type="EC" id="2.7.11.1"/>
    </reaction>
</comment>
<comment type="cofactor">
    <cofactor evidence="5">
        <name>Mg(2+)</name>
        <dbReference type="ChEBI" id="CHEBI:18420"/>
    </cofactor>
    <cofactor evidence="5">
        <name>Mn(2+)</name>
        <dbReference type="ChEBI" id="CHEBI:29035"/>
    </cofactor>
    <cofactor evidence="5">
        <name>Co(2+)</name>
        <dbReference type="ChEBI" id="CHEBI:48828"/>
    </cofactor>
    <cofactor evidence="5">
        <name>Zn(2+)</name>
        <dbReference type="ChEBI" id="CHEBI:29105"/>
    </cofactor>
</comment>
<comment type="biophysicochemical properties">
    <kinetics>
        <KM evidence="5">12.8 uM for manganese ions</KM>
        <KM evidence="5">34.9 uM for cobalt ions</KM>
        <KM evidence="5">22.7 uM for magnesium ions</KM>
        <KM evidence="5">4.1 uM for zinc ions</KM>
        <Vmax evidence="5">2623.1 pmol/min/mg enzyme for manganese ions</Vmax>
        <Vmax evidence="5">1746.1 pmol/min/mg enzyme for cobalt ions</Vmax>
        <Vmax evidence="5">129.1 pmol/min/mg enzyme for magnesium ions</Vmax>
        <Vmax evidence="5">22.3 pmol/min/mg enzyme for zinc ions</Vmax>
    </kinetics>
</comment>
<comment type="subunit">
    <text evidence="9 13 14">Monomer (PubMed:20124694). Interacts with CTTNBP2NL (PubMed:18782753). Interacts with RIPOR1 (via C-terminus); this interaction occurs in a PDCD10-dependent and Rho-independent manner (PubMed:27807006). Interacts with PDCD10; this interaction is required for the association of STK24 with RIPOR1 (PubMed:27807006). Part of the core of STRIPAK complexes composed of PP2A catalytic and scaffolding subunits, the striatins (PP2A regulatory subunits), the striatin-associated proteins MOB4, STRIP1 and STRIP2, PDCD10 and members of the STE20 kinases, such as STK24 and STK26 (PubMed:18782753).</text>
</comment>
<comment type="interaction">
    <interactant intactId="EBI-740175">
        <id>Q9Y6E0</id>
    </interactant>
    <interactant intactId="EBI-1774273">
        <id>Q9P2B4</id>
        <label>CTTNBP2NL</label>
    </interactant>
    <organismsDiffer>false</organismsDiffer>
    <experiments>5</experiments>
</comment>
<comment type="interaction">
    <interactant intactId="EBI-740175">
        <id>Q9Y6E0</id>
    </interactant>
    <interactant intactId="EBI-740195">
        <id>Q9BUL8</id>
        <label>PDCD10</label>
    </interactant>
    <organismsDiffer>false</organismsDiffer>
    <experiments>14</experiments>
</comment>
<comment type="interaction">
    <interactant intactId="EBI-740175">
        <id>Q9Y6E0</id>
    </interactant>
    <interactant intactId="EBI-1773588">
        <id>Q5VSL9</id>
        <label>STRIP1</label>
    </interactant>
    <organismsDiffer>false</organismsDiffer>
    <experiments>5</experiments>
</comment>
<comment type="interaction">
    <interactant intactId="EBI-740175">
        <id>Q9Y6E0</id>
    </interactant>
    <interactant intactId="EBI-1046642">
        <id>O43815</id>
        <label>STRN</label>
    </interactant>
    <organismsDiffer>false</organismsDiffer>
    <experiments>6</experiments>
</comment>
<comment type="interaction">
    <interactant intactId="EBI-740175">
        <id>Q9Y6E0</id>
    </interactant>
    <interactant intactId="EBI-765817">
        <id>Q9Y228</id>
        <label>TRAF3IP3</label>
    </interactant>
    <organismsDiffer>false</organismsDiffer>
    <experiments>2</experiments>
</comment>
<comment type="interaction">
    <interactant intactId="EBI-10299018">
        <id>Q9Y6E0-2</id>
    </interactant>
    <interactant intactId="EBI-306905">
        <id>Q9Y376</id>
        <label>CAB39</label>
    </interactant>
    <organismsDiffer>false</organismsDiffer>
    <experiments>3</experiments>
</comment>
<comment type="interaction">
    <interactant intactId="EBI-10299018">
        <id>Q9Y6E0-2</id>
    </interactant>
    <interactant intactId="EBI-740195">
        <id>Q9BUL8</id>
        <label>PDCD10</label>
    </interactant>
    <organismsDiffer>false</organismsDiffer>
    <experiments>9</experiments>
</comment>
<comment type="subcellular location">
    <subcellularLocation>
        <location>Cytoplasm</location>
    </subcellularLocation>
    <subcellularLocation>
        <location>Nucleus</location>
    </subcellularLocation>
    <subcellularLocation>
        <location>Membrane</location>
    </subcellularLocation>
    <text>The truncated form (MST3/N) translocates to the nucleus. Colocalizes with STK38L in the membrane.</text>
</comment>
<comment type="alternative products">
    <event type="alternative splicing"/>
    <isoform>
        <id>Q9Y6E0-1</id>
        <name>B</name>
        <sequence type="displayed"/>
    </isoform>
    <isoform>
        <id>Q9Y6E0-2</id>
        <name>A</name>
        <sequence type="described" ref="VSP_004874"/>
    </isoform>
</comment>
<comment type="tissue specificity">
    <text>Isoform A is ubiquitous. Isoform B is expressed in brain with high expression in hippocampus and cerebral cortex.</text>
</comment>
<comment type="PTM">
    <text evidence="4">Proteolytically processed by caspases during apoptosis. Proteolytic cleavage results in kinase activation, nuclear translocation of the truncated form (MST3/N) and the induction of apoptosis.</text>
</comment>
<comment type="PTM">
    <text evidence="3 7 10 13">Isoform B is activated by phosphorylation by PKA. Oxidative stress induces phosphorylation. Activated by autophosphorylation at Thr-190 and phosphorylation at this site is essential for its function. Manganese, magnesium and cobalt-dependent autophosphorylation is mainly on threonine residues while zinc-dependent autophosphorylation is on both serine and threonine residues.</text>
</comment>
<comment type="similarity">
    <text evidence="17">Belongs to the protein kinase superfamily. STE Ser/Thr protein kinase family. STE20 subfamily.</text>
</comment>
<proteinExistence type="evidence at protein level"/>
<reference key="1">
    <citation type="journal article" date="1997" name="J. Biol. Chem.">
        <title>Cloning and characterization of a human STE20-like protein kinase with unusual cofactor requirements.</title>
        <authorList>
            <person name="Schinkmann K."/>
            <person name="Blenis J."/>
        </authorList>
    </citation>
    <scope>NUCLEOTIDE SEQUENCE [MRNA] (ISOFORM A)</scope>
</reference>
<reference key="2">
    <citation type="journal article" date="2000" name="J. Biol. Chem.">
        <title>Identification of a human brain-specific isoform of mammalian STE20-like kinase 3 that is regulated by cAMP-dependent protein kinase.</title>
        <authorList>
            <person name="Zhou T.-H."/>
            <person name="Ling K."/>
            <person name="Guo J."/>
            <person name="Zhou H."/>
            <person name="Wu Y.-L."/>
            <person name="Jing Q."/>
            <person name="Ma L."/>
            <person name="Pei G."/>
        </authorList>
    </citation>
    <scope>NUCLEOTIDE SEQUENCE [MRNA] (ISOFORM B)</scope>
    <scope>PHOSPHORYLATION AT THR-18</scope>
    <scope>MUTAGENESIS OF THR-18</scope>
    <scope>VARIANT VAL-414</scope>
    <source>
        <tissue>Brain</tissue>
    </source>
</reference>
<reference key="3">
    <citation type="journal article" date="2004" name="Nature">
        <title>The DNA sequence and analysis of human chromosome 13.</title>
        <authorList>
            <person name="Dunham A."/>
            <person name="Matthews L.H."/>
            <person name="Burton J."/>
            <person name="Ashurst J.L."/>
            <person name="Howe K.L."/>
            <person name="Ashcroft K.J."/>
            <person name="Beare D.M."/>
            <person name="Burford D.C."/>
            <person name="Hunt S.E."/>
            <person name="Griffiths-Jones S."/>
            <person name="Jones M.C."/>
            <person name="Keenan S.J."/>
            <person name="Oliver K."/>
            <person name="Scott C.E."/>
            <person name="Ainscough R."/>
            <person name="Almeida J.P."/>
            <person name="Ambrose K.D."/>
            <person name="Andrews D.T."/>
            <person name="Ashwell R.I.S."/>
            <person name="Babbage A.K."/>
            <person name="Bagguley C.L."/>
            <person name="Bailey J."/>
            <person name="Bannerjee R."/>
            <person name="Barlow K.F."/>
            <person name="Bates K."/>
            <person name="Beasley H."/>
            <person name="Bird C.P."/>
            <person name="Bray-Allen S."/>
            <person name="Brown A.J."/>
            <person name="Brown J.Y."/>
            <person name="Burrill W."/>
            <person name="Carder C."/>
            <person name="Carter N.P."/>
            <person name="Chapman J.C."/>
            <person name="Clamp M.E."/>
            <person name="Clark S.Y."/>
            <person name="Clarke G."/>
            <person name="Clee C.M."/>
            <person name="Clegg S.C."/>
            <person name="Cobley V."/>
            <person name="Collins J.E."/>
            <person name="Corby N."/>
            <person name="Coville G.J."/>
            <person name="Deloukas P."/>
            <person name="Dhami P."/>
            <person name="Dunham I."/>
            <person name="Dunn M."/>
            <person name="Earthrowl M.E."/>
            <person name="Ellington A.G."/>
            <person name="Faulkner L."/>
            <person name="Frankish A.G."/>
            <person name="Frankland J."/>
            <person name="French L."/>
            <person name="Garner P."/>
            <person name="Garnett J."/>
            <person name="Gilbert J.G.R."/>
            <person name="Gilson C.J."/>
            <person name="Ghori J."/>
            <person name="Grafham D.V."/>
            <person name="Gribble S.M."/>
            <person name="Griffiths C."/>
            <person name="Hall R.E."/>
            <person name="Hammond S."/>
            <person name="Harley J.L."/>
            <person name="Hart E.A."/>
            <person name="Heath P.D."/>
            <person name="Howden P.J."/>
            <person name="Huckle E.J."/>
            <person name="Hunt P.J."/>
            <person name="Hunt A.R."/>
            <person name="Johnson C."/>
            <person name="Johnson D."/>
            <person name="Kay M."/>
            <person name="Kimberley A.M."/>
            <person name="King A."/>
            <person name="Laird G.K."/>
            <person name="Langford C.J."/>
            <person name="Lawlor S."/>
            <person name="Leongamornlert D.A."/>
            <person name="Lloyd D.M."/>
            <person name="Lloyd C."/>
            <person name="Loveland J.E."/>
            <person name="Lovell J."/>
            <person name="Martin S."/>
            <person name="Mashreghi-Mohammadi M."/>
            <person name="McLaren S.J."/>
            <person name="McMurray A."/>
            <person name="Milne S."/>
            <person name="Moore M.J.F."/>
            <person name="Nickerson T."/>
            <person name="Palmer S.A."/>
            <person name="Pearce A.V."/>
            <person name="Peck A.I."/>
            <person name="Pelan S."/>
            <person name="Phillimore B."/>
            <person name="Porter K.M."/>
            <person name="Rice C.M."/>
            <person name="Searle S."/>
            <person name="Sehra H.K."/>
            <person name="Shownkeen R."/>
            <person name="Skuce C.D."/>
            <person name="Smith M."/>
            <person name="Steward C.A."/>
            <person name="Sycamore N."/>
            <person name="Tester J."/>
            <person name="Thomas D.W."/>
            <person name="Tracey A."/>
            <person name="Tromans A."/>
            <person name="Tubby B."/>
            <person name="Wall M."/>
            <person name="Wallis J.M."/>
            <person name="West A.P."/>
            <person name="Whitehead S.L."/>
            <person name="Willey D.L."/>
            <person name="Wilming L."/>
            <person name="Wray P.W."/>
            <person name="Wright M.W."/>
            <person name="Young L."/>
            <person name="Coulson A."/>
            <person name="Durbin R.M."/>
            <person name="Hubbard T."/>
            <person name="Sulston J.E."/>
            <person name="Beck S."/>
            <person name="Bentley D.R."/>
            <person name="Rogers J."/>
            <person name="Ross M.T."/>
        </authorList>
    </citation>
    <scope>NUCLEOTIDE SEQUENCE [LARGE SCALE GENOMIC DNA]</scope>
</reference>
<reference key="4">
    <citation type="submission" date="2005-07" db="EMBL/GenBank/DDBJ databases">
        <authorList>
            <person name="Mural R.J."/>
            <person name="Istrail S."/>
            <person name="Sutton G.G."/>
            <person name="Florea L."/>
            <person name="Halpern A.L."/>
            <person name="Mobarry C.M."/>
            <person name="Lippert R."/>
            <person name="Walenz B."/>
            <person name="Shatkay H."/>
            <person name="Dew I."/>
            <person name="Miller J.R."/>
            <person name="Flanigan M.J."/>
            <person name="Edwards N.J."/>
            <person name="Bolanos R."/>
            <person name="Fasulo D."/>
            <person name="Halldorsson B.V."/>
            <person name="Hannenhalli S."/>
            <person name="Turner R."/>
            <person name="Yooseph S."/>
            <person name="Lu F."/>
            <person name="Nusskern D.R."/>
            <person name="Shue B.C."/>
            <person name="Zheng X.H."/>
            <person name="Zhong F."/>
            <person name="Delcher A.L."/>
            <person name="Huson D.H."/>
            <person name="Kravitz S.A."/>
            <person name="Mouchard L."/>
            <person name="Reinert K."/>
            <person name="Remington K.A."/>
            <person name="Clark A.G."/>
            <person name="Waterman M.S."/>
            <person name="Eichler E.E."/>
            <person name="Adams M.D."/>
            <person name="Hunkapiller M.W."/>
            <person name="Myers E.W."/>
            <person name="Venter J.C."/>
        </authorList>
    </citation>
    <scope>NUCLEOTIDE SEQUENCE [LARGE SCALE GENOMIC DNA]</scope>
</reference>
<reference key="5">
    <citation type="journal article" date="2004" name="Genome Res.">
        <title>The status, quality, and expansion of the NIH full-length cDNA project: the Mammalian Gene Collection (MGC).</title>
        <authorList>
            <consortium name="The MGC Project Team"/>
        </authorList>
    </citation>
    <scope>NUCLEOTIDE SEQUENCE [LARGE SCALE MRNA] (ISOFORM A)</scope>
    <source>
        <tissue>Skin</tissue>
    </source>
</reference>
<reference key="6">
    <citation type="journal article" date="2002" name="J. Biol. Chem.">
        <title>Caspase activation of mammalian sterile 20-like kinase 3 (Mst3).</title>
        <authorList>
            <person name="Huang C.Y."/>
            <person name="Wu Y.M."/>
            <person name="Hsu C.Y."/>
            <person name="Lee W.S."/>
            <person name="Lai M.D."/>
            <person name="Lu T.J."/>
            <person name="Huang C.L."/>
            <person name="Leu T.H."/>
            <person name="Shih H.M."/>
            <person name="Fang H.I."/>
            <person name="Robinson D.R."/>
            <person name="Kung H.J."/>
            <person name="Yuan C.J."/>
        </authorList>
    </citation>
    <scope>PROTEOLYTIC PROCESSING</scope>
    <scope>SUBCELLULAR LOCATION</scope>
    <scope>MUTAGENESIS OF LYS-65 AND ASP-321</scope>
</reference>
<reference key="7">
    <citation type="journal article" date="2004" name="FEBS Lett.">
        <title>Identification and characterization of the nuclear import and export signals of the mammalian Ste20-like protein kinase 3.</title>
        <authorList>
            <person name="Lee W.S."/>
            <person name="Hsu C.Y."/>
            <person name="Wang P.L."/>
            <person name="Huang C.Y."/>
            <person name="Chang C.H."/>
            <person name="Yuan C.J."/>
        </authorList>
    </citation>
    <scope>SUBCELLULAR LOCATION</scope>
    <scope>NUCLEAR LOCALIZATION SIGNAL</scope>
    <scope>NUCLEAR EXPORT SIGNAL</scope>
</reference>
<reference key="8">
    <citation type="journal article" date="2005" name="J. Inorg. Biochem.">
        <title>Zinc ion acts as a cofactor for serine/threonine kinase MST3 and has a distinct role in autophosphorylation of MST3.</title>
        <authorList>
            <person name="Lu T.J."/>
            <person name="Huang C.Y."/>
            <person name="Yuan C.J."/>
            <person name="Lee Y.C."/>
            <person name="Leu T.H."/>
            <person name="Chang W.C."/>
            <person name="Lu T.L."/>
            <person name="Jeng W.Y."/>
            <person name="Lai M.D."/>
        </authorList>
    </citation>
    <scope>COFACTOR</scope>
    <scope>BIOPHYSICOCHEMICAL PROPERTIES</scope>
</reference>
<reference key="9">
    <citation type="journal article" date="2005" name="Mol. Cell. Biol.">
        <title>Regulation of NDR protein kinase by hydrophobic motif phosphorylation mediated by the mammalian Ste20-like kinase MST3.</title>
        <authorList>
            <person name="Stegert M.R."/>
            <person name="Hergovich A."/>
            <person name="Tamaskovic R."/>
            <person name="Bichsel S.J."/>
            <person name="Hemmings B.A."/>
        </authorList>
    </citation>
    <scope>FUNCTION</scope>
    <scope>SUBCELLULAR LOCATION</scope>
</reference>
<reference key="10">
    <citation type="journal article" date="2006" name="Cell">
        <title>Global, in vivo, and site-specific phosphorylation dynamics in signaling networks.</title>
        <authorList>
            <person name="Olsen J.V."/>
            <person name="Blagoev B."/>
            <person name="Gnad F."/>
            <person name="Macek B."/>
            <person name="Kumar C."/>
            <person name="Mortensen P."/>
            <person name="Mann M."/>
        </authorList>
    </citation>
    <scope>PHOSPHORYLATION [LARGE SCALE ANALYSIS] AT SER-320</scope>
    <scope>IDENTIFICATION BY MASS SPECTROMETRY [LARGE SCALE ANALYSIS]</scope>
    <source>
        <tissue>Cervix carcinoma</tissue>
    </source>
</reference>
<reference key="11">
    <citation type="journal article" date="2006" name="J. Biol. Chem.">
        <title>Inhibition of cell migration by autophosphorylated mammalian sterile 20-like kinase 3 (MST3) involves paxillin and protein-tyrosine phosphatase-PEST.</title>
        <authorList>
            <person name="Lu T.J."/>
            <person name="Lai W.Y."/>
            <person name="Huang C.Y."/>
            <person name="Hsieh W.J."/>
            <person name="Yu J.S."/>
            <person name="Hsieh Y.J."/>
            <person name="Chang W.T."/>
            <person name="Leu T.H."/>
            <person name="Chang W.C."/>
            <person name="Chuang W.J."/>
            <person name="Tang M.J."/>
            <person name="Chen T.Y."/>
            <person name="Lu T.L."/>
            <person name="Lai M.D."/>
        </authorList>
    </citation>
    <scope>FUNCTION</scope>
    <scope>PHOSPHORYLATION AT THR-190</scope>
    <scope>MUTAGENESIS OF THR-190</scope>
</reference>
<reference key="12">
    <citation type="journal article" date="2008" name="Mol. Cell">
        <title>Kinase-selective enrichment enables quantitative phosphoproteomics of the kinome across the cell cycle.</title>
        <authorList>
            <person name="Daub H."/>
            <person name="Olsen J.V."/>
            <person name="Bairlein M."/>
            <person name="Gnad F."/>
            <person name="Oppermann F.S."/>
            <person name="Korner R."/>
            <person name="Greff Z."/>
            <person name="Keri G."/>
            <person name="Stemmann O."/>
            <person name="Mann M."/>
        </authorList>
    </citation>
    <scope>PHOSPHORYLATION [LARGE SCALE ANALYSIS] AT SER-4 (ISOFORM A)</scope>
    <scope>IDENTIFICATION BY MASS SPECTROMETRY [LARGE SCALE ANALYSIS]</scope>
    <source>
        <tissue>Cervix carcinoma</tissue>
    </source>
</reference>
<reference key="13">
    <citation type="journal article" date="2009" name="Biosci. Rep.">
        <title>Mammalian sterile 20-like kinase 3 (MST3) mediates oxidative-stress-induced cell death by modulating JNK activation.</title>
        <authorList>
            <person name="Chen C.B."/>
            <person name="Ng J.K."/>
            <person name="Choo P.H."/>
            <person name="Wu W."/>
            <person name="Porter A.G."/>
        </authorList>
    </citation>
    <scope>FUNCTION</scope>
    <scope>PHOSPHORYLATION AT THR-190</scope>
</reference>
<reference key="14">
    <citation type="journal article" date="2009" name="Mol. Cell. Proteomics">
        <title>A PP2A phosphatase high density interaction network identifies a novel striatin-interacting phosphatase and kinase complex linked to the cerebral cavernous malformation 3 (CCM3) protein.</title>
        <authorList>
            <person name="Goudreault M."/>
            <person name="D'Ambrosio L.M."/>
            <person name="Kean M.J."/>
            <person name="Mullin M.J."/>
            <person name="Larsen B.G."/>
            <person name="Sanchez A."/>
            <person name="Chaudhry S."/>
            <person name="Chen G.I."/>
            <person name="Sicheri F."/>
            <person name="Nesvizhskii A.I."/>
            <person name="Aebersold R."/>
            <person name="Raught B."/>
            <person name="Gingras A.C."/>
        </authorList>
    </citation>
    <scope>INTERACTION WITH CTTNBP2NL</scope>
    <scope>IDENTIFICATION IN STRIPAK COMPLEX</scope>
    <scope>FUNCTION</scope>
</reference>
<reference key="15">
    <citation type="journal article" date="2009" name="Mol. Cell. Proteomics">
        <title>Large-scale proteomics analysis of the human kinome.</title>
        <authorList>
            <person name="Oppermann F.S."/>
            <person name="Gnad F."/>
            <person name="Olsen J.V."/>
            <person name="Hornberger R."/>
            <person name="Greff Z."/>
            <person name="Keri G."/>
            <person name="Mann M."/>
            <person name="Daub H."/>
        </authorList>
    </citation>
    <scope>ACETYLATION [LARGE SCALE ANALYSIS] AT ALA-2 (ISOFORM A)</scope>
    <scope>PHOSPHORYLATION [LARGE SCALE ANALYSIS] AT SER-4 (ISOFORM A)</scope>
    <scope>CLEAVAGE OF INITIATOR METHIONINE [LARGE SCALE ANALYSIS] (ISOFORM A)</scope>
    <scope>IDENTIFICATION BY MASS SPECTROMETRY [LARGE SCALE ANALYSIS]</scope>
</reference>
<reference key="16">
    <citation type="journal article" date="2009" name="Nat. Neurosci.">
        <title>Mst3b, an Ste20-like kinase, regulates axon regeneration in mature CNS and PNS pathways.</title>
        <authorList>
            <person name="Lorber B."/>
            <person name="Howe M.L."/>
            <person name="Benowitz L.I."/>
            <person name="Irwin N."/>
        </authorList>
    </citation>
    <scope>FUNCTION</scope>
</reference>
<reference key="17">
    <citation type="journal article" date="2010" name="Int. J. Biochem. Cell Biol.">
        <title>Mammalian Ste20-like protein kinase 3 induces a caspase-independent apoptotic pathway.</title>
        <authorList>
            <person name="Lin C.Y."/>
            <person name="Wu H.Y."/>
            <person name="Wang P.L."/>
            <person name="Yuan C.J."/>
        </authorList>
    </citation>
    <scope>FUNCTION</scope>
</reference>
<reference key="18">
    <citation type="journal article" date="2010" name="Sci. Signal.">
        <title>Quantitative phosphoproteomics reveals widespread full phosphorylation site occupancy during mitosis.</title>
        <authorList>
            <person name="Olsen J.V."/>
            <person name="Vermeulen M."/>
            <person name="Santamaria A."/>
            <person name="Kumar C."/>
            <person name="Miller M.L."/>
            <person name="Jensen L.J."/>
            <person name="Gnad F."/>
            <person name="Cox J."/>
            <person name="Jensen T.S."/>
            <person name="Nigg E.A."/>
            <person name="Brunak S."/>
            <person name="Mann M."/>
        </authorList>
    </citation>
    <scope>ACETYLATION [LARGE SCALE ANALYSIS] AT ALA-2 (ISOFORM A)</scope>
    <scope>PHOSPHORYLATION [LARGE SCALE ANALYSIS] AT SER-4 (ISOFORM A)</scope>
    <scope>CLEAVAGE OF INITIATOR METHIONINE [LARGE SCALE ANALYSIS] (ISOFORM A)</scope>
    <scope>IDENTIFICATION BY MASS SPECTROMETRY [LARGE SCALE ANALYSIS]</scope>
    <source>
        <tissue>Cervix carcinoma</tissue>
    </source>
</reference>
<reference key="19">
    <citation type="journal article" date="2011" name="BMC Syst. Biol.">
        <title>Initial characterization of the human central proteome.</title>
        <authorList>
            <person name="Burkard T.R."/>
            <person name="Planyavsky M."/>
            <person name="Kaupe I."/>
            <person name="Breitwieser F.P."/>
            <person name="Buerckstuemmer T."/>
            <person name="Bennett K.L."/>
            <person name="Superti-Furga G."/>
            <person name="Colinge J."/>
        </authorList>
    </citation>
    <scope>IDENTIFICATION BY MASS SPECTROMETRY [LARGE SCALE ANALYSIS]</scope>
</reference>
<reference key="20">
    <citation type="journal article" date="2011" name="Sci. Signal.">
        <title>System-wide temporal characterization of the proteome and phosphoproteome of human embryonic stem cell differentiation.</title>
        <authorList>
            <person name="Rigbolt K.T."/>
            <person name="Prokhorova T.A."/>
            <person name="Akimov V."/>
            <person name="Henningsen J."/>
            <person name="Johansen P.T."/>
            <person name="Kratchmarova I."/>
            <person name="Kassem M."/>
            <person name="Mann M."/>
            <person name="Olsen J.V."/>
            <person name="Blagoev B."/>
        </authorList>
    </citation>
    <scope>ACETYLATION [LARGE SCALE ANALYSIS] AT ALA-2 (ISOFORM A)</scope>
    <scope>PHOSPHORYLATION [LARGE SCALE ANALYSIS] AT SER-4 (ISOFORM A)</scope>
    <scope>CLEAVAGE OF INITIATOR METHIONINE [LARGE SCALE ANALYSIS] (ISOFORM A)</scope>
    <scope>IDENTIFICATION BY MASS SPECTROMETRY [LARGE SCALE ANALYSIS]</scope>
</reference>
<reference key="21">
    <citation type="journal article" date="2013" name="J. Proteome Res.">
        <title>Toward a comprehensive characterization of a human cancer cell phosphoproteome.</title>
        <authorList>
            <person name="Zhou H."/>
            <person name="Di Palma S."/>
            <person name="Preisinger C."/>
            <person name="Peng M."/>
            <person name="Polat A.N."/>
            <person name="Heck A.J."/>
            <person name="Mohammed S."/>
        </authorList>
    </citation>
    <scope>PHOSPHORYLATION [LARGE SCALE ANALYSIS] AT THR-190</scope>
    <scope>IDENTIFICATION BY MASS SPECTROMETRY [LARGE SCALE ANALYSIS]</scope>
    <source>
        <tissue>Erythroleukemia</tissue>
    </source>
</reference>
<reference key="22">
    <citation type="journal article" date="2016" name="J. Cell Sci.">
        <title>RHO binding to FAM65A regulates Golgi reorientation during cell migration.</title>
        <authorList>
            <person name="Mardakheh F.K."/>
            <person name="Self A."/>
            <person name="Marshall C.J."/>
        </authorList>
    </citation>
    <scope>FUNCTION</scope>
    <scope>INTERACTION WITH PDCD10 AND RIPOR1</scope>
</reference>
<reference key="23">
    <citation type="journal article" date="2010" name="Acta Crystallogr. D">
        <title>Structures of human MST3 kinase in complex with adenine, ADP and Mn2+.</title>
        <authorList>
            <person name="Ko T.P."/>
            <person name="Jeng W.Y."/>
            <person name="Liu C.I."/>
            <person name="Lai M.D."/>
            <person name="Wu C.L."/>
            <person name="Chang W.J."/>
            <person name="Shr H.L."/>
            <person name="Lu T.J."/>
            <person name="Wang A.H."/>
        </authorList>
    </citation>
    <scope>X-RAY CRYSTALLOGRAPHY (1.45 ANGSTROMS) OF 27-315 IN COMPLEX WITH ADENINE; ADP AND MANGANESE IONS</scope>
    <scope>SUBUNIT</scope>
    <scope>PHOSPHORYLATION AT THR-190</scope>
</reference>
<reference key="24">
    <citation type="journal article" date="2007" name="Nature">
        <title>Patterns of somatic mutation in human cancer genomes.</title>
        <authorList>
            <person name="Greenman C."/>
            <person name="Stephens P."/>
            <person name="Smith R."/>
            <person name="Dalgliesh G.L."/>
            <person name="Hunter C."/>
            <person name="Bignell G."/>
            <person name="Davies H."/>
            <person name="Teague J."/>
            <person name="Butler A."/>
            <person name="Stevens C."/>
            <person name="Edkins S."/>
            <person name="O'Meara S."/>
            <person name="Vastrik I."/>
            <person name="Schmidt E.E."/>
            <person name="Avis T."/>
            <person name="Barthorpe S."/>
            <person name="Bhamra G."/>
            <person name="Buck G."/>
            <person name="Choudhury B."/>
            <person name="Clements J."/>
            <person name="Cole J."/>
            <person name="Dicks E."/>
            <person name="Forbes S."/>
            <person name="Gray K."/>
            <person name="Halliday K."/>
            <person name="Harrison R."/>
            <person name="Hills K."/>
            <person name="Hinton J."/>
            <person name="Jenkinson A."/>
            <person name="Jones D."/>
            <person name="Menzies A."/>
            <person name="Mironenko T."/>
            <person name="Perry J."/>
            <person name="Raine K."/>
            <person name="Richardson D."/>
            <person name="Shepherd R."/>
            <person name="Small A."/>
            <person name="Tofts C."/>
            <person name="Varian J."/>
            <person name="Webb T."/>
            <person name="West S."/>
            <person name="Widaa S."/>
            <person name="Yates A."/>
            <person name="Cahill D.P."/>
            <person name="Louis D.N."/>
            <person name="Goldstraw P."/>
            <person name="Nicholson A.G."/>
            <person name="Brasseur F."/>
            <person name="Looijenga L."/>
            <person name="Weber B.L."/>
            <person name="Chiew Y.-E."/>
            <person name="DeFazio A."/>
            <person name="Greaves M.F."/>
            <person name="Green A.R."/>
            <person name="Campbell P."/>
            <person name="Birney E."/>
            <person name="Easton D.F."/>
            <person name="Chenevix-Trench G."/>
            <person name="Tan M.-H."/>
            <person name="Khoo S.K."/>
            <person name="Teh B.T."/>
            <person name="Yuen S.T."/>
            <person name="Leung S.Y."/>
            <person name="Wooster R."/>
            <person name="Futreal P.A."/>
            <person name="Stratton M.R."/>
        </authorList>
    </citation>
    <scope>VARIANTS [LARGE SCALE ANALYSIS] VAL-414 AND ILE-426</scope>
</reference>
<organism>
    <name type="scientific">Homo sapiens</name>
    <name type="common">Human</name>
    <dbReference type="NCBI Taxonomy" id="9606"/>
    <lineage>
        <taxon>Eukaryota</taxon>
        <taxon>Metazoa</taxon>
        <taxon>Chordata</taxon>
        <taxon>Craniata</taxon>
        <taxon>Vertebrata</taxon>
        <taxon>Euteleostomi</taxon>
        <taxon>Mammalia</taxon>
        <taxon>Eutheria</taxon>
        <taxon>Euarchontoglires</taxon>
        <taxon>Primates</taxon>
        <taxon>Haplorrhini</taxon>
        <taxon>Catarrhini</taxon>
        <taxon>Hominidae</taxon>
        <taxon>Homo</taxon>
    </lineage>
</organism>
<sequence>MDSRAQLWGLALNKRRATLPHPGGSTNLKADPEELFTKLEKIGKGSFGEVFKGIDNRTQKVVAIKIIDLEEAEDEIEDIQQEITVLSQCDSPYVTKYYGSYLKDTKLWIIMEYLGGGSALDLLEPGPLDETQIATILREILKGLDYLHSEKKIHRDIKAANVLLSEHGEVKLADFGVAGQLTDTQIKRNTFVGTPFWMAPEVIKQSAYDSKADIWSLGITAIELARGEPPHSELHPMKVLFLIPKNNPPTLEGNYSKPLKEFVEACLNKEPSFRPTAKELLKHKFILRNAKKTSYLTELIDRYKRWKAEQSHDDSSSEDSDAETDGQASGGSDSGDWIFTIREKDPKNLENGALQPSDLDRNKMKDIPKRPFSQCLSTIISPLFAELKEKSQACGGNLGSIEELRGAIYLAEEACPGISDTMVAQLVQRLQRYSLSGGGTSSH</sequence>
<evidence type="ECO:0000255" key="1">
    <source>
        <dbReference type="PROSITE-ProRule" id="PRU00159"/>
    </source>
</evidence>
<evidence type="ECO:0000256" key="2">
    <source>
        <dbReference type="SAM" id="MobiDB-lite"/>
    </source>
</evidence>
<evidence type="ECO:0000269" key="3">
    <source>
    </source>
</evidence>
<evidence type="ECO:0000269" key="4">
    <source>
    </source>
</evidence>
<evidence type="ECO:0000269" key="5">
    <source>
    </source>
</evidence>
<evidence type="ECO:0000269" key="6">
    <source>
    </source>
</evidence>
<evidence type="ECO:0000269" key="7">
    <source>
    </source>
</evidence>
<evidence type="ECO:0000269" key="8">
    <source>
    </source>
</evidence>
<evidence type="ECO:0000269" key="9">
    <source>
    </source>
</evidence>
<evidence type="ECO:0000269" key="10">
    <source>
    </source>
</evidence>
<evidence type="ECO:0000269" key="11">
    <source>
    </source>
</evidence>
<evidence type="ECO:0000269" key="12">
    <source>
    </source>
</evidence>
<evidence type="ECO:0000269" key="13">
    <source>
    </source>
</evidence>
<evidence type="ECO:0000269" key="14">
    <source>
    </source>
</evidence>
<evidence type="ECO:0000303" key="15">
    <source>
    </source>
</evidence>
<evidence type="ECO:0000303" key="16">
    <source>
    </source>
</evidence>
<evidence type="ECO:0000305" key="17"/>
<evidence type="ECO:0000312" key="18">
    <source>
        <dbReference type="EMBL" id="AAD42039.1"/>
    </source>
</evidence>
<evidence type="ECO:0000312" key="19">
    <source>
        <dbReference type="HGNC" id="HGNC:11403"/>
    </source>
</evidence>
<evidence type="ECO:0007744" key="20">
    <source>
    </source>
</evidence>
<evidence type="ECO:0007744" key="21">
    <source>
    </source>
</evidence>
<evidence type="ECO:0007744" key="22">
    <source>
    </source>
</evidence>
<evidence type="ECO:0007744" key="23">
    <source>
    </source>
</evidence>
<evidence type="ECO:0007744" key="24">
    <source>
    </source>
</evidence>
<evidence type="ECO:0007744" key="25">
    <source>
    </source>
</evidence>
<evidence type="ECO:0007829" key="26">
    <source>
        <dbReference type="PDB" id="3A7H"/>
    </source>
</evidence>
<evidence type="ECO:0007829" key="27">
    <source>
        <dbReference type="PDB" id="3A7I"/>
    </source>
</evidence>
<evidence type="ECO:0007829" key="28">
    <source>
        <dbReference type="PDB" id="3ZHP"/>
    </source>
</evidence>
<evidence type="ECO:0007829" key="29">
    <source>
        <dbReference type="PDB" id="4QML"/>
    </source>
</evidence>
<evidence type="ECO:0007829" key="30">
    <source>
        <dbReference type="PDB" id="8QLQ"/>
    </source>
</evidence>
<evidence type="ECO:0007829" key="31">
    <source>
        <dbReference type="PDB" id="8QLT"/>
    </source>
</evidence>
<protein>
    <recommendedName>
        <fullName>Serine/threonine-protein kinase 24</fullName>
        <ecNumber>2.7.11.1</ecNumber>
    </recommendedName>
    <alternativeName>
        <fullName>Mammalian STE20-like protein kinase 3</fullName>
        <shortName>MST-3</shortName>
    </alternativeName>
    <alternativeName>
        <fullName>STE20-like kinase MST3</fullName>
    </alternativeName>
    <component>
        <recommendedName>
            <fullName>Serine/threonine-protein kinase 24 36 kDa subunit</fullName>
        </recommendedName>
        <alternativeName>
            <fullName>Mammalian STE20-like protein kinase 3 N-terminal</fullName>
            <shortName>MST3/N</shortName>
        </alternativeName>
    </component>
    <component>
        <recommendedName>
            <fullName>Serine/threonine-protein kinase 24 12 kDa subunit</fullName>
        </recommendedName>
        <alternativeName>
            <fullName>Mammalian STE20-like protein kinase 3 C-terminal</fullName>
            <shortName>MST3/C</shortName>
        </alternativeName>
    </component>
</protein>
<dbReference type="EC" id="2.7.11.1"/>
<dbReference type="EMBL" id="AF024636">
    <property type="protein sequence ID" value="AAB82560.1"/>
    <property type="molecule type" value="mRNA"/>
</dbReference>
<dbReference type="EMBL" id="AF083420">
    <property type="protein sequence ID" value="AAD42039.1"/>
    <property type="molecule type" value="mRNA"/>
</dbReference>
<dbReference type="EMBL" id="AL356423">
    <property type="status" value="NOT_ANNOTATED_CDS"/>
    <property type="molecule type" value="Genomic_DNA"/>
</dbReference>
<dbReference type="EMBL" id="AL137249">
    <property type="status" value="NOT_ANNOTATED_CDS"/>
    <property type="molecule type" value="Genomic_DNA"/>
</dbReference>
<dbReference type="EMBL" id="CH471085">
    <property type="protein sequence ID" value="EAX08986.1"/>
    <property type="molecule type" value="Genomic_DNA"/>
</dbReference>
<dbReference type="EMBL" id="BC035578">
    <property type="protein sequence ID" value="AAH35578.1"/>
    <property type="molecule type" value="mRNA"/>
</dbReference>
<dbReference type="CCDS" id="CCDS32001.1">
    <molecule id="Q9Y6E0-2"/>
</dbReference>
<dbReference type="CCDS" id="CCDS9488.1">
    <molecule id="Q9Y6E0-1"/>
</dbReference>
<dbReference type="RefSeq" id="NP_001027467.2">
    <molecule id="Q9Y6E0-2"/>
    <property type="nucleotide sequence ID" value="NM_001032296.4"/>
</dbReference>
<dbReference type="RefSeq" id="NP_003567.2">
    <molecule id="Q9Y6E0-1"/>
    <property type="nucleotide sequence ID" value="NM_003576.4"/>
</dbReference>
<dbReference type="PDB" id="3A7F">
    <property type="method" value="X-ray"/>
    <property type="resolution" value="1.55 A"/>
    <property type="chains" value="A=27-315"/>
</dbReference>
<dbReference type="PDB" id="3A7G">
    <property type="method" value="X-ray"/>
    <property type="resolution" value="2.00 A"/>
    <property type="chains" value="A/B=27-315"/>
</dbReference>
<dbReference type="PDB" id="3A7H">
    <property type="method" value="X-ray"/>
    <property type="resolution" value="1.96 A"/>
    <property type="chains" value="A/B=27-315"/>
</dbReference>
<dbReference type="PDB" id="3A7I">
    <property type="method" value="X-ray"/>
    <property type="resolution" value="1.45 A"/>
    <property type="chains" value="A=27-315"/>
</dbReference>
<dbReference type="PDB" id="3A7J">
    <property type="method" value="X-ray"/>
    <property type="resolution" value="1.50 A"/>
    <property type="chains" value="A=27-315"/>
</dbReference>
<dbReference type="PDB" id="3CKW">
    <property type="method" value="X-ray"/>
    <property type="resolution" value="1.96 A"/>
    <property type="chains" value="A=31-323"/>
</dbReference>
<dbReference type="PDB" id="3CKX">
    <property type="method" value="X-ray"/>
    <property type="resolution" value="2.70 A"/>
    <property type="chains" value="A=31-323"/>
</dbReference>
<dbReference type="PDB" id="3ZHP">
    <property type="method" value="X-ray"/>
    <property type="resolution" value="2.90 A"/>
    <property type="chains" value="C/D=31-301"/>
</dbReference>
<dbReference type="PDB" id="4O27">
    <property type="method" value="X-ray"/>
    <property type="resolution" value="3.19 A"/>
    <property type="chains" value="B=30-309"/>
</dbReference>
<dbReference type="PDB" id="4QML">
    <property type="method" value="X-ray"/>
    <property type="resolution" value="1.88 A"/>
    <property type="chains" value="A=24-315"/>
</dbReference>
<dbReference type="PDB" id="4QMM">
    <property type="method" value="X-ray"/>
    <property type="resolution" value="1.85 A"/>
    <property type="chains" value="A=24-315"/>
</dbReference>
<dbReference type="PDB" id="4QMN">
    <property type="method" value="X-ray"/>
    <property type="resolution" value="2.09 A"/>
    <property type="chains" value="A=27-315"/>
</dbReference>
<dbReference type="PDB" id="4QMO">
    <property type="method" value="X-ray"/>
    <property type="resolution" value="1.90 A"/>
    <property type="chains" value="A=24-315"/>
</dbReference>
<dbReference type="PDB" id="4QMP">
    <property type="method" value="X-ray"/>
    <property type="resolution" value="2.00 A"/>
    <property type="chains" value="A=24-315"/>
</dbReference>
<dbReference type="PDB" id="4QMQ">
    <property type="method" value="X-ray"/>
    <property type="resolution" value="1.77 A"/>
    <property type="chains" value="A=24-315"/>
</dbReference>
<dbReference type="PDB" id="4QMS">
    <property type="method" value="X-ray"/>
    <property type="resolution" value="1.88 A"/>
    <property type="chains" value="A=24-315"/>
</dbReference>
<dbReference type="PDB" id="4QMT">
    <property type="method" value="X-ray"/>
    <property type="resolution" value="1.50 A"/>
    <property type="chains" value="A=24-315"/>
</dbReference>
<dbReference type="PDB" id="4QMU">
    <property type="method" value="X-ray"/>
    <property type="resolution" value="1.55 A"/>
    <property type="chains" value="A=24-315"/>
</dbReference>
<dbReference type="PDB" id="4QMV">
    <property type="method" value="X-ray"/>
    <property type="resolution" value="2.40 A"/>
    <property type="chains" value="A=24-315"/>
</dbReference>
<dbReference type="PDB" id="4QMW">
    <property type="method" value="X-ray"/>
    <property type="resolution" value="1.60 A"/>
    <property type="chains" value="A=24-315"/>
</dbReference>
<dbReference type="PDB" id="4QMX">
    <property type="method" value="X-ray"/>
    <property type="resolution" value="1.88 A"/>
    <property type="chains" value="A=24-315"/>
</dbReference>
<dbReference type="PDB" id="4QMY">
    <property type="method" value="X-ray"/>
    <property type="resolution" value="1.88 A"/>
    <property type="chains" value="A=24-315"/>
</dbReference>
<dbReference type="PDB" id="4QMZ">
    <property type="method" value="X-ray"/>
    <property type="resolution" value="1.88 A"/>
    <property type="chains" value="A=24-315"/>
</dbReference>
<dbReference type="PDB" id="4QNA">
    <property type="method" value="X-ray"/>
    <property type="resolution" value="1.85 A"/>
    <property type="chains" value="A=27-315"/>
</dbReference>
<dbReference type="PDB" id="4QO9">
    <property type="method" value="X-ray"/>
    <property type="resolution" value="2.20 A"/>
    <property type="chains" value="A/B=24-315"/>
</dbReference>
<dbReference type="PDB" id="4U8Z">
    <property type="method" value="X-ray"/>
    <property type="resolution" value="1.63 A"/>
    <property type="chains" value="A=24-310"/>
</dbReference>
<dbReference type="PDB" id="4W8D">
    <property type="method" value="X-ray"/>
    <property type="resolution" value="1.77 A"/>
    <property type="chains" value="A=24-310"/>
</dbReference>
<dbReference type="PDB" id="4W8E">
    <property type="method" value="X-ray"/>
    <property type="resolution" value="1.79 A"/>
    <property type="chains" value="A=24-311"/>
</dbReference>
<dbReference type="PDB" id="7B30">
    <property type="method" value="X-ray"/>
    <property type="resolution" value="2.10 A"/>
    <property type="chains" value="A=4-301"/>
</dbReference>
<dbReference type="PDB" id="7B31">
    <property type="method" value="X-ray"/>
    <property type="resolution" value="1.80 A"/>
    <property type="chains" value="A=4-301"/>
</dbReference>
<dbReference type="PDB" id="7B32">
    <property type="method" value="X-ray"/>
    <property type="resolution" value="1.75 A"/>
    <property type="chains" value="A=4-301"/>
</dbReference>
<dbReference type="PDB" id="7B33">
    <property type="method" value="X-ray"/>
    <property type="resolution" value="1.90 A"/>
    <property type="chains" value="A=4-301"/>
</dbReference>
<dbReference type="PDB" id="7B34">
    <property type="method" value="X-ray"/>
    <property type="resolution" value="2.10 A"/>
    <property type="chains" value="A=4-301"/>
</dbReference>
<dbReference type="PDB" id="7B35">
    <property type="method" value="X-ray"/>
    <property type="resolution" value="2.40 A"/>
    <property type="chains" value="A/B=4-301"/>
</dbReference>
<dbReference type="PDB" id="8BZI">
    <property type="method" value="X-ray"/>
    <property type="resolution" value="1.72 A"/>
    <property type="chains" value="A=4-301"/>
</dbReference>
<dbReference type="PDB" id="8BZJ">
    <property type="method" value="X-ray"/>
    <property type="resolution" value="2.52 A"/>
    <property type="chains" value="A/B=4-301"/>
</dbReference>
<dbReference type="PDB" id="8QLQ">
    <property type="method" value="X-ray"/>
    <property type="resolution" value="1.64 A"/>
    <property type="chains" value="A=4-301"/>
</dbReference>
<dbReference type="PDB" id="8QLR">
    <property type="method" value="X-ray"/>
    <property type="resolution" value="1.85 A"/>
    <property type="chains" value="A/B=4-301"/>
</dbReference>
<dbReference type="PDB" id="8QLS">
    <property type="method" value="X-ray"/>
    <property type="resolution" value="1.61 A"/>
    <property type="chains" value="A=4-301"/>
</dbReference>
<dbReference type="PDB" id="8QLT">
    <property type="method" value="X-ray"/>
    <property type="resolution" value="1.47 A"/>
    <property type="chains" value="A=4-301"/>
</dbReference>
<dbReference type="PDBsum" id="3A7F"/>
<dbReference type="PDBsum" id="3A7G"/>
<dbReference type="PDBsum" id="3A7H"/>
<dbReference type="PDBsum" id="3A7I"/>
<dbReference type="PDBsum" id="3A7J"/>
<dbReference type="PDBsum" id="3CKW"/>
<dbReference type="PDBsum" id="3CKX"/>
<dbReference type="PDBsum" id="3ZHP"/>
<dbReference type="PDBsum" id="4O27"/>
<dbReference type="PDBsum" id="4QML"/>
<dbReference type="PDBsum" id="4QMM"/>
<dbReference type="PDBsum" id="4QMN"/>
<dbReference type="PDBsum" id="4QMO"/>
<dbReference type="PDBsum" id="4QMP"/>
<dbReference type="PDBsum" id="4QMQ"/>
<dbReference type="PDBsum" id="4QMS"/>
<dbReference type="PDBsum" id="4QMT"/>
<dbReference type="PDBsum" id="4QMU"/>
<dbReference type="PDBsum" id="4QMV"/>
<dbReference type="PDBsum" id="4QMW"/>
<dbReference type="PDBsum" id="4QMX"/>
<dbReference type="PDBsum" id="4QMY"/>
<dbReference type="PDBsum" id="4QMZ"/>
<dbReference type="PDBsum" id="4QNA"/>
<dbReference type="PDBsum" id="4QO9"/>
<dbReference type="PDBsum" id="4U8Z"/>
<dbReference type="PDBsum" id="4W8D"/>
<dbReference type="PDBsum" id="4W8E"/>
<dbReference type="PDBsum" id="7B30"/>
<dbReference type="PDBsum" id="7B31"/>
<dbReference type="PDBsum" id="7B32"/>
<dbReference type="PDBsum" id="7B33"/>
<dbReference type="PDBsum" id="7B34"/>
<dbReference type="PDBsum" id="7B35"/>
<dbReference type="PDBsum" id="8BZI"/>
<dbReference type="PDBsum" id="8BZJ"/>
<dbReference type="PDBsum" id="8QLQ"/>
<dbReference type="PDBsum" id="8QLR"/>
<dbReference type="PDBsum" id="8QLS"/>
<dbReference type="PDBsum" id="8QLT"/>
<dbReference type="SMR" id="Q9Y6E0"/>
<dbReference type="BioGRID" id="114011">
    <property type="interactions" value="187"/>
</dbReference>
<dbReference type="DIP" id="DIP-40608N"/>
<dbReference type="FunCoup" id="Q9Y6E0">
    <property type="interactions" value="3071"/>
</dbReference>
<dbReference type="IntAct" id="Q9Y6E0">
    <property type="interactions" value="88"/>
</dbReference>
<dbReference type="MINT" id="Q9Y6E0"/>
<dbReference type="STRING" id="9606.ENSP00000365730"/>
<dbReference type="BindingDB" id="Q9Y6E0"/>
<dbReference type="ChEMBL" id="CHEMBL5082"/>
<dbReference type="DrugBank" id="DB12010">
    <property type="generic name" value="Fostamatinib"/>
</dbReference>
<dbReference type="DrugCentral" id="Q9Y6E0"/>
<dbReference type="GuidetoPHARMACOLOGY" id="2217"/>
<dbReference type="GlyGen" id="Q9Y6E0">
    <property type="glycosylation" value="2 sites, 1 O-linked glycan (2 sites)"/>
</dbReference>
<dbReference type="iPTMnet" id="Q9Y6E0"/>
<dbReference type="MetOSite" id="Q9Y6E0"/>
<dbReference type="PhosphoSitePlus" id="Q9Y6E0"/>
<dbReference type="SwissPalm" id="Q9Y6E0"/>
<dbReference type="BioMuta" id="STK24"/>
<dbReference type="DMDM" id="13626607"/>
<dbReference type="CPTAC" id="CPTAC-3208"/>
<dbReference type="CPTAC" id="CPTAC-3209"/>
<dbReference type="jPOST" id="Q9Y6E0"/>
<dbReference type="MassIVE" id="Q9Y6E0"/>
<dbReference type="PaxDb" id="9606-ENSP00000365730"/>
<dbReference type="PeptideAtlas" id="Q9Y6E0"/>
<dbReference type="PRIDE" id="Q9Y6E0"/>
<dbReference type="ProteomicsDB" id="86657">
    <molecule id="Q9Y6E0-1"/>
</dbReference>
<dbReference type="ProteomicsDB" id="86658">
    <molecule id="Q9Y6E0-2"/>
</dbReference>
<dbReference type="Pumba" id="Q9Y6E0"/>
<dbReference type="Antibodypedia" id="10785">
    <property type="antibodies" value="349 antibodies from 34 providers"/>
</dbReference>
<dbReference type="DNASU" id="8428"/>
<dbReference type="Ensembl" id="ENST00000376547.7">
    <molecule id="Q9Y6E0-1"/>
    <property type="protein sequence ID" value="ENSP00000365730.3"/>
    <property type="gene ID" value="ENSG00000102572.15"/>
</dbReference>
<dbReference type="Ensembl" id="ENST00000539966.6">
    <molecule id="Q9Y6E0-2"/>
    <property type="protein sequence ID" value="ENSP00000442539.2"/>
    <property type="gene ID" value="ENSG00000102572.15"/>
</dbReference>
<dbReference type="GeneID" id="8428"/>
<dbReference type="KEGG" id="hsa:8428"/>
<dbReference type="MANE-Select" id="ENST00000539966.6">
    <molecule id="Q9Y6E0-2"/>
    <property type="protein sequence ID" value="ENSP00000442539.2"/>
    <property type="RefSeq nucleotide sequence ID" value="NM_001032296.4"/>
    <property type="RefSeq protein sequence ID" value="NP_001027467.2"/>
</dbReference>
<dbReference type="UCSC" id="uc001vnm.3">
    <molecule id="Q9Y6E0-1"/>
    <property type="organism name" value="human"/>
</dbReference>
<dbReference type="AGR" id="HGNC:11403"/>
<dbReference type="CTD" id="8428"/>
<dbReference type="DisGeNET" id="8428"/>
<dbReference type="GeneCards" id="STK24"/>
<dbReference type="HGNC" id="HGNC:11403">
    <property type="gene designation" value="STK24"/>
</dbReference>
<dbReference type="HPA" id="ENSG00000102572">
    <property type="expression patterns" value="Low tissue specificity"/>
</dbReference>
<dbReference type="MIM" id="604984">
    <property type="type" value="gene"/>
</dbReference>
<dbReference type="neXtProt" id="NX_Q9Y6E0"/>
<dbReference type="OpenTargets" id="ENSG00000102572"/>
<dbReference type="PharmGKB" id="PA36210"/>
<dbReference type="VEuPathDB" id="HostDB:ENSG00000102572"/>
<dbReference type="eggNOG" id="KOG0201">
    <property type="taxonomic scope" value="Eukaryota"/>
</dbReference>
<dbReference type="GeneTree" id="ENSGT00940000153476"/>
<dbReference type="InParanoid" id="Q9Y6E0"/>
<dbReference type="OMA" id="KFIMRNA"/>
<dbReference type="OrthoDB" id="8693905at2759"/>
<dbReference type="PAN-GO" id="Q9Y6E0">
    <property type="GO annotations" value="5 GO annotations based on evolutionary models"/>
</dbReference>
<dbReference type="PhylomeDB" id="Q9Y6E0"/>
<dbReference type="TreeFam" id="TF354217"/>
<dbReference type="PathwayCommons" id="Q9Y6E0"/>
<dbReference type="Reactome" id="R-HSA-111465">
    <property type="pathway name" value="Apoptotic cleavage of cellular proteins"/>
</dbReference>
<dbReference type="Reactome" id="R-HSA-75153">
    <property type="pathway name" value="Apoptotic execution phase"/>
</dbReference>
<dbReference type="SABIO-RK" id="Q9Y6E0"/>
<dbReference type="SignaLink" id="Q9Y6E0"/>
<dbReference type="SIGNOR" id="Q9Y6E0"/>
<dbReference type="BioGRID-ORCS" id="8428">
    <property type="hits" value="18 hits in 1189 CRISPR screens"/>
</dbReference>
<dbReference type="ChiTaRS" id="STK24">
    <property type="organism name" value="human"/>
</dbReference>
<dbReference type="EvolutionaryTrace" id="Q9Y6E0"/>
<dbReference type="GeneWiki" id="STK24"/>
<dbReference type="GenomeRNAi" id="8428"/>
<dbReference type="Pharos" id="Q9Y6E0">
    <property type="development level" value="Tchem"/>
</dbReference>
<dbReference type="PRO" id="PR:Q9Y6E0"/>
<dbReference type="Proteomes" id="UP000005640">
    <property type="component" value="Chromosome 13"/>
</dbReference>
<dbReference type="RNAct" id="Q9Y6E0">
    <property type="molecule type" value="protein"/>
</dbReference>
<dbReference type="Bgee" id="ENSG00000102572">
    <property type="expression patterns" value="Expressed in secondary oocyte and 210 other cell types or tissues"/>
</dbReference>
<dbReference type="ExpressionAtlas" id="Q9Y6E0">
    <property type="expression patterns" value="baseline and differential"/>
</dbReference>
<dbReference type="GO" id="GO:0005737">
    <property type="term" value="C:cytoplasm"/>
    <property type="evidence" value="ECO:0000314"/>
    <property type="project" value="UniProtKB"/>
</dbReference>
<dbReference type="GO" id="GO:0005829">
    <property type="term" value="C:cytosol"/>
    <property type="evidence" value="ECO:0000314"/>
    <property type="project" value="HPA"/>
</dbReference>
<dbReference type="GO" id="GO:0070062">
    <property type="term" value="C:extracellular exosome"/>
    <property type="evidence" value="ECO:0007005"/>
    <property type="project" value="UniProtKB"/>
</dbReference>
<dbReference type="GO" id="GO:0090443">
    <property type="term" value="C:FAR/SIN/STRIPAK complex"/>
    <property type="evidence" value="ECO:0000314"/>
    <property type="project" value="UniProtKB"/>
</dbReference>
<dbReference type="GO" id="GO:0005794">
    <property type="term" value="C:Golgi apparatus"/>
    <property type="evidence" value="ECO:0000318"/>
    <property type="project" value="GO_Central"/>
</dbReference>
<dbReference type="GO" id="GO:0016020">
    <property type="term" value="C:membrane"/>
    <property type="evidence" value="ECO:0007669"/>
    <property type="project" value="UniProtKB-SubCell"/>
</dbReference>
<dbReference type="GO" id="GO:0005730">
    <property type="term" value="C:nucleolus"/>
    <property type="evidence" value="ECO:0000314"/>
    <property type="project" value="HPA"/>
</dbReference>
<dbReference type="GO" id="GO:0005654">
    <property type="term" value="C:nucleoplasm"/>
    <property type="evidence" value="ECO:0000304"/>
    <property type="project" value="Reactome"/>
</dbReference>
<dbReference type="GO" id="GO:0005634">
    <property type="term" value="C:nucleus"/>
    <property type="evidence" value="ECO:0000314"/>
    <property type="project" value="UniProtKB"/>
</dbReference>
<dbReference type="GO" id="GO:0005524">
    <property type="term" value="F:ATP binding"/>
    <property type="evidence" value="ECO:0007669"/>
    <property type="project" value="UniProtKB-KW"/>
</dbReference>
<dbReference type="GO" id="GO:0045296">
    <property type="term" value="F:cadherin binding"/>
    <property type="evidence" value="ECO:0007005"/>
    <property type="project" value="BHF-UCL"/>
</dbReference>
<dbReference type="GO" id="GO:0046872">
    <property type="term" value="F:metal ion binding"/>
    <property type="evidence" value="ECO:0007669"/>
    <property type="project" value="UniProtKB-KW"/>
</dbReference>
<dbReference type="GO" id="GO:0004672">
    <property type="term" value="F:protein kinase activity"/>
    <property type="evidence" value="ECO:0000304"/>
    <property type="project" value="ProtInc"/>
</dbReference>
<dbReference type="GO" id="GO:0106310">
    <property type="term" value="F:protein serine kinase activity"/>
    <property type="evidence" value="ECO:0007669"/>
    <property type="project" value="RHEA"/>
</dbReference>
<dbReference type="GO" id="GO:0004674">
    <property type="term" value="F:protein serine/threonine kinase activity"/>
    <property type="evidence" value="ECO:0000314"/>
    <property type="project" value="UniProtKB"/>
</dbReference>
<dbReference type="GO" id="GO:0034599">
    <property type="term" value="P:cellular response to oxidative stress"/>
    <property type="evidence" value="ECO:0000314"/>
    <property type="project" value="UniProtKB"/>
</dbReference>
<dbReference type="GO" id="GO:0009267">
    <property type="term" value="P:cellular response to starvation"/>
    <property type="evidence" value="ECO:0000315"/>
    <property type="project" value="UniProtKB"/>
</dbReference>
<dbReference type="GO" id="GO:0097194">
    <property type="term" value="P:execution phase of apoptosis"/>
    <property type="evidence" value="ECO:0000315"/>
    <property type="project" value="UniProtKB"/>
</dbReference>
<dbReference type="GO" id="GO:0035556">
    <property type="term" value="P:intracellular signal transduction"/>
    <property type="evidence" value="ECO:0000318"/>
    <property type="project" value="GO_Central"/>
</dbReference>
<dbReference type="GO" id="GO:0008631">
    <property type="term" value="P:intrinsic apoptotic signaling pathway in response to oxidative stress"/>
    <property type="evidence" value="ECO:0000315"/>
    <property type="project" value="UniProtKB"/>
</dbReference>
<dbReference type="GO" id="GO:0030336">
    <property type="term" value="P:negative regulation of cell migration"/>
    <property type="evidence" value="ECO:0000315"/>
    <property type="project" value="UniProtKB"/>
</dbReference>
<dbReference type="GO" id="GO:0046777">
    <property type="term" value="P:protein autophosphorylation"/>
    <property type="evidence" value="ECO:0000314"/>
    <property type="project" value="UniProtKB"/>
</dbReference>
<dbReference type="GO" id="GO:0006468">
    <property type="term" value="P:protein phosphorylation"/>
    <property type="evidence" value="ECO:0000314"/>
    <property type="project" value="UniProtKB"/>
</dbReference>
<dbReference type="GO" id="GO:0048679">
    <property type="term" value="P:regulation of axon regeneration"/>
    <property type="evidence" value="ECO:0000315"/>
    <property type="project" value="UniProtKB"/>
</dbReference>
<dbReference type="GO" id="GO:0007165">
    <property type="term" value="P:signal transduction"/>
    <property type="evidence" value="ECO:0000304"/>
    <property type="project" value="ProtInc"/>
</dbReference>
<dbReference type="CDD" id="cd06609">
    <property type="entry name" value="STKc_MST3_like"/>
    <property type="match status" value="1"/>
</dbReference>
<dbReference type="FunFam" id="1.10.510.10:FF:000411">
    <property type="entry name" value="Probable Ste20-like kinase Don3"/>
    <property type="match status" value="1"/>
</dbReference>
<dbReference type="FunFam" id="1.10.12.70:FF:000002">
    <property type="entry name" value="Serine/threonine kinase 24"/>
    <property type="match status" value="1"/>
</dbReference>
<dbReference type="FunFam" id="3.30.200.20:FF:000252">
    <property type="entry name" value="Serine/threonine-protein kinase 26"/>
    <property type="match status" value="1"/>
</dbReference>
<dbReference type="Gene3D" id="1.10.12.70">
    <property type="match status" value="1"/>
</dbReference>
<dbReference type="Gene3D" id="3.30.200.20">
    <property type="entry name" value="Phosphorylase Kinase, domain 1"/>
    <property type="match status" value="1"/>
</dbReference>
<dbReference type="Gene3D" id="1.10.510.10">
    <property type="entry name" value="Transferase(Phosphotransferase) domain 1"/>
    <property type="match status" value="1"/>
</dbReference>
<dbReference type="InterPro" id="IPR011009">
    <property type="entry name" value="Kinase-like_dom_sf"/>
</dbReference>
<dbReference type="InterPro" id="IPR046409">
    <property type="entry name" value="PDC10_dimerisation_sf"/>
</dbReference>
<dbReference type="InterPro" id="IPR048288">
    <property type="entry name" value="PDCD10_N"/>
</dbReference>
<dbReference type="InterPro" id="IPR000719">
    <property type="entry name" value="Prot_kinase_dom"/>
</dbReference>
<dbReference type="InterPro" id="IPR017441">
    <property type="entry name" value="Protein_kinase_ATP_BS"/>
</dbReference>
<dbReference type="InterPro" id="IPR050629">
    <property type="entry name" value="STE20/SPS1-PAK"/>
</dbReference>
<dbReference type="PANTHER" id="PTHR48012:SF22">
    <property type="entry name" value="SERINE_THREONINE-PROTEIN KINASE 24"/>
    <property type="match status" value="1"/>
</dbReference>
<dbReference type="PANTHER" id="PTHR48012">
    <property type="entry name" value="STERILE20-LIKE KINASE, ISOFORM B-RELATED"/>
    <property type="match status" value="1"/>
</dbReference>
<dbReference type="Pfam" id="PF20929">
    <property type="entry name" value="PDCD10_N"/>
    <property type="match status" value="1"/>
</dbReference>
<dbReference type="Pfam" id="PF00069">
    <property type="entry name" value="Pkinase"/>
    <property type="match status" value="1"/>
</dbReference>
<dbReference type="SMART" id="SM00220">
    <property type="entry name" value="S_TKc"/>
    <property type="match status" value="1"/>
</dbReference>
<dbReference type="SUPFAM" id="SSF56112">
    <property type="entry name" value="Protein kinase-like (PK-like)"/>
    <property type="match status" value="1"/>
</dbReference>
<dbReference type="PROSITE" id="PS00107">
    <property type="entry name" value="PROTEIN_KINASE_ATP"/>
    <property type="match status" value="1"/>
</dbReference>
<dbReference type="PROSITE" id="PS50011">
    <property type="entry name" value="PROTEIN_KINASE_DOM"/>
    <property type="match status" value="1"/>
</dbReference>
<keyword id="KW-0002">3D-structure</keyword>
<keyword id="KW-0007">Acetylation</keyword>
<keyword id="KW-0025">Alternative splicing</keyword>
<keyword id="KW-0053">Apoptosis</keyword>
<keyword id="KW-0067">ATP-binding</keyword>
<keyword id="KW-0963">Cytoplasm</keyword>
<keyword id="KW-0418">Kinase</keyword>
<keyword id="KW-0460">Magnesium</keyword>
<keyword id="KW-0472">Membrane</keyword>
<keyword id="KW-0479">Metal-binding</keyword>
<keyword id="KW-0547">Nucleotide-binding</keyword>
<keyword id="KW-0539">Nucleus</keyword>
<keyword id="KW-0597">Phosphoprotein</keyword>
<keyword id="KW-1267">Proteomics identification</keyword>
<keyword id="KW-1185">Reference proteome</keyword>
<keyword id="KW-0723">Serine/threonine-protein kinase</keyword>
<keyword id="KW-0808">Transferase</keyword>